<gene>
    <name type="primary">lnpkb</name>
    <name type="synonym">lnpb</name>
</gene>
<comment type="function">
    <text evidence="2 3">Endoplasmic reticulum (ER)-shaping membrane protein that plays a role in determining ER morphology. Involved in the stabilization of nascent three-way ER tubular junctions within the ER network. May also play a role as a curvature-stabilizing protein within three-way ER tubular junction network (By similarity).</text>
</comment>
<comment type="subunit">
    <text evidence="1">Homodimer; homodimerization requires the C4-type zinc finger motif and decreases during mitosis in a phosphorylation-dependent manner.</text>
</comment>
<comment type="subcellular location">
    <subcellularLocation>
        <location evidence="3">Endoplasmic reticulum membrane</location>
        <topology evidence="3">Multi-pass membrane protein</topology>
        <orientation evidence="3">Cytoplasmic side</orientation>
    </subcellularLocation>
    <text evidence="3">Localizes at endoplasmic reticulum (ER) three-way tubular junctions, which represent crossing-points at which the tubules build a polygonal network.</text>
</comment>
<comment type="domain">
    <text evidence="3">The transmembrane domain 1 and 2 function as a signal-anchor and stop-transfer sequence, respectively, generating a double-spanning integral membrane protein with a N- and C-terminal cytoplasmic orientation. Transmembrane domain 1 and 2 are probably sufficient to mediate membrane translocation and topology formation in a N-myristoylation-independent manner. Transmembrane domain 2 is sufficient to block the protein secretion pathway. The two coiled-coil domains are necessary for its endoplasmic reticulum (ER) three-way tubular junction localization. The C4-type zinc finger motif is necessary both for its ER three-way tubular junction localization and formation.</text>
</comment>
<comment type="PTM">
    <text evidence="1">Phosphorylated. Phosphorylation occurs during interphase. Phosphorylation also occurs during mitosis; these phosphorylations reduce both its homodimerization and the ER three-way tubular junction formation.</text>
</comment>
<comment type="similarity">
    <text evidence="6">Belongs to the lunapark family.</text>
</comment>
<evidence type="ECO:0000250" key="1">
    <source>
        <dbReference type="UniProtKB" id="Q6DFJ8"/>
    </source>
</evidence>
<evidence type="ECO:0000250" key="2">
    <source>
        <dbReference type="UniProtKB" id="Q7TQ95"/>
    </source>
</evidence>
<evidence type="ECO:0000250" key="3">
    <source>
        <dbReference type="UniProtKB" id="Q9C0E8"/>
    </source>
</evidence>
<evidence type="ECO:0000255" key="4"/>
<evidence type="ECO:0000256" key="5">
    <source>
        <dbReference type="SAM" id="MobiDB-lite"/>
    </source>
</evidence>
<evidence type="ECO:0000305" key="6"/>
<name>LNPB_TAKRU</name>
<keyword id="KW-0175">Coiled coil</keyword>
<keyword id="KW-0256">Endoplasmic reticulum</keyword>
<keyword id="KW-0472">Membrane</keyword>
<keyword id="KW-0479">Metal-binding</keyword>
<keyword id="KW-1185">Reference proteome</keyword>
<keyword id="KW-0812">Transmembrane</keyword>
<keyword id="KW-1133">Transmembrane helix</keyword>
<keyword id="KW-0862">Zinc</keyword>
<keyword id="KW-0863">Zinc-finger</keyword>
<organism>
    <name type="scientific">Takifugu rubripes</name>
    <name type="common">Japanese pufferfish</name>
    <name type="synonym">Fugu rubripes</name>
    <dbReference type="NCBI Taxonomy" id="31033"/>
    <lineage>
        <taxon>Eukaryota</taxon>
        <taxon>Metazoa</taxon>
        <taxon>Chordata</taxon>
        <taxon>Craniata</taxon>
        <taxon>Vertebrata</taxon>
        <taxon>Euteleostomi</taxon>
        <taxon>Actinopterygii</taxon>
        <taxon>Neopterygii</taxon>
        <taxon>Teleostei</taxon>
        <taxon>Neoteleostei</taxon>
        <taxon>Acanthomorphata</taxon>
        <taxon>Eupercaria</taxon>
        <taxon>Tetraodontiformes</taxon>
        <taxon>Tetradontoidea</taxon>
        <taxon>Tetraodontidae</taxon>
        <taxon>Takifugu</taxon>
    </lineage>
</organism>
<protein>
    <recommendedName>
        <fullName evidence="6">Endoplasmic reticulum junction formation protein lunapark-B</fullName>
    </recommendedName>
    <alternativeName>
        <fullName evidence="3">ER junction formation factor lunapark</fullName>
    </alternativeName>
</protein>
<feature type="chain" id="PRO_0000248316" description="Endoplasmic reticulum junction formation protein lunapark-B">
    <location>
        <begin position="1"/>
        <end position="358"/>
    </location>
</feature>
<feature type="topological domain" description="Cytoplasmic" evidence="3">
    <location>
        <begin position="1"/>
        <end position="45"/>
    </location>
</feature>
<feature type="transmembrane region" description="Helical" evidence="4">
    <location>
        <begin position="46"/>
        <end position="66"/>
    </location>
</feature>
<feature type="topological domain" description="Lumenal" evidence="3">
    <location>
        <begin position="67"/>
        <end position="69"/>
    </location>
</feature>
<feature type="transmembrane region" description="Helical" evidence="4">
    <location>
        <begin position="70"/>
        <end position="90"/>
    </location>
</feature>
<feature type="topological domain" description="Cytoplasmic" evidence="3">
    <location>
        <begin position="91"/>
        <end position="358"/>
    </location>
</feature>
<feature type="zinc finger region" description="C4-type; plays a role in ER morphology" evidence="3">
    <location>
        <begin position="275"/>
        <end position="300"/>
    </location>
</feature>
<feature type="region of interest" description="Disordered" evidence="5">
    <location>
        <begin position="320"/>
        <end position="358"/>
    </location>
</feature>
<feature type="coiled-coil region" evidence="4">
    <location>
        <begin position="9"/>
        <end position="41"/>
    </location>
</feature>
<feature type="coiled-coil region" evidence="4">
    <location>
        <begin position="99"/>
        <end position="128"/>
    </location>
</feature>
<reference key="1">
    <citation type="journal article" date="2006" name="Proc. Natl. Acad. Sci. U.S.A.">
        <title>Highly conserved syntenic blocks at the vertebrate Hox loci and conserved regulatory elements within and outside Hox gene clusters.</title>
        <authorList>
            <person name="Lee A.P."/>
            <person name="Koh E.G.L."/>
            <person name="Tay A."/>
            <person name="Brenner S."/>
            <person name="Venkatesh B."/>
        </authorList>
    </citation>
    <scope>NUCLEOTIDE SEQUENCE [GENOMIC DNA]</scope>
</reference>
<dbReference type="EMBL" id="DQ481669">
    <property type="protein sequence ID" value="ABF22475.1"/>
    <property type="molecule type" value="Genomic_DNA"/>
</dbReference>
<dbReference type="RefSeq" id="NP_001098697.1">
    <property type="nucleotide sequence ID" value="NM_001105227.1"/>
</dbReference>
<dbReference type="RefSeq" id="XP_011601340.1">
    <property type="nucleotide sequence ID" value="XM_011603038.1"/>
</dbReference>
<dbReference type="FunCoup" id="Q1KKR9">
    <property type="interactions" value="1152"/>
</dbReference>
<dbReference type="STRING" id="31033.ENSTRUP00000023314"/>
<dbReference type="GeneID" id="100125769"/>
<dbReference type="KEGG" id="tru:100125769"/>
<dbReference type="CTD" id="80856"/>
<dbReference type="eggNOG" id="KOG2846">
    <property type="taxonomic scope" value="Eukaryota"/>
</dbReference>
<dbReference type="InParanoid" id="Q1KKR9"/>
<dbReference type="OrthoDB" id="1725934at2759"/>
<dbReference type="Proteomes" id="UP000005226">
    <property type="component" value="Unplaced"/>
</dbReference>
<dbReference type="GO" id="GO:0005789">
    <property type="term" value="C:endoplasmic reticulum membrane"/>
    <property type="evidence" value="ECO:0000250"/>
    <property type="project" value="UniProtKB"/>
</dbReference>
<dbReference type="GO" id="GO:0098826">
    <property type="term" value="C:endoplasmic reticulum tubular network membrane"/>
    <property type="evidence" value="ECO:0000250"/>
    <property type="project" value="UniProtKB"/>
</dbReference>
<dbReference type="GO" id="GO:0042802">
    <property type="term" value="F:identical protein binding"/>
    <property type="evidence" value="ECO:0000250"/>
    <property type="project" value="UniProtKB"/>
</dbReference>
<dbReference type="GO" id="GO:0008270">
    <property type="term" value="F:zinc ion binding"/>
    <property type="evidence" value="ECO:0007669"/>
    <property type="project" value="UniProtKB-KW"/>
</dbReference>
<dbReference type="GO" id="GO:0071788">
    <property type="term" value="P:endoplasmic reticulum tubular network maintenance"/>
    <property type="evidence" value="ECO:0000250"/>
    <property type="project" value="UniProtKB"/>
</dbReference>
<dbReference type="GO" id="GO:1903373">
    <property type="term" value="P:positive regulation of endoplasmic reticulum tubular network organization"/>
    <property type="evidence" value="ECO:0000250"/>
    <property type="project" value="UniProtKB"/>
</dbReference>
<dbReference type="InterPro" id="IPR040115">
    <property type="entry name" value="Lnp"/>
</dbReference>
<dbReference type="InterPro" id="IPR019273">
    <property type="entry name" value="Lunapark_Znf"/>
</dbReference>
<dbReference type="PANTHER" id="PTHR22166">
    <property type="entry name" value="ENDOPLASMIC RETICULUM JUNCTION FORMATION PROTEIN LUNAPARK"/>
    <property type="match status" value="1"/>
</dbReference>
<dbReference type="PANTHER" id="PTHR22166:SF14">
    <property type="entry name" value="ENDOPLASMIC RETICULUM JUNCTION FORMATION PROTEIN LUNAPARK-B"/>
    <property type="match status" value="1"/>
</dbReference>
<dbReference type="Pfam" id="PF10058">
    <property type="entry name" value="Zn_ribbon_10"/>
    <property type="match status" value="1"/>
</dbReference>
<accession>Q1KKR9</accession>
<sequence>MGAIISRWKTKLTTVEQLENIDKEIKQLEEFRAKNQRLQKLWVGRLLLYSSALYLLISLFVYLLYLPEQWLLRLAMALPFFIYPVLVWFIRRFLIFLFSKRSERNNDKLEDLKATKKKILEEVMETETYKNAKAILERFDPDAKKKPELEATPVRPQMTPGAGQELRQRGVALRHMPMGTPVAVTPGARPPLGPGGTPVERVPLSAPGGPPERSGLAASVQMTPRSLGSPVPGVGMHPPGPPLARPVLPKDRGAVDRVIEYLVGDGPQNRYALICQQCFSHNGMALKEEFEYLAFRCAYCYFLNPARKMRPQAPRLPEFNFEKRLRAESSTPGPAPHSATDTEESAPPSRGMDKHGRA</sequence>
<proteinExistence type="inferred from homology"/>